<dbReference type="EMBL" id="U26209">
    <property type="protein sequence ID" value="AAA98504.1"/>
    <property type="molecule type" value="mRNA"/>
</dbReference>
<dbReference type="EMBL" id="AK298388">
    <property type="protein sequence ID" value="BAG60623.1"/>
    <property type="molecule type" value="mRNA"/>
</dbReference>
<dbReference type="EMBL" id="AK314684">
    <property type="protein sequence ID" value="BAG37236.1"/>
    <property type="molecule type" value="mRNA"/>
</dbReference>
<dbReference type="EMBL" id="AC015917">
    <property type="status" value="NOT_ANNOTATED_CDS"/>
    <property type="molecule type" value="Genomic_DNA"/>
</dbReference>
<dbReference type="EMBL" id="BC096277">
    <property type="protein sequence ID" value="AAH96277.1"/>
    <property type="molecule type" value="mRNA"/>
</dbReference>
<dbReference type="EMBL" id="BC096278">
    <property type="protein sequence ID" value="AAH96278.1"/>
    <property type="molecule type" value="mRNA"/>
</dbReference>
<dbReference type="EMBL" id="BC096279">
    <property type="protein sequence ID" value="AAH96279.1"/>
    <property type="molecule type" value="mRNA"/>
</dbReference>
<dbReference type="CCDS" id="CCDS11231.1">
    <molecule id="Q13183-1"/>
</dbReference>
<dbReference type="CCDS" id="CCDS54098.1">
    <molecule id="Q13183-3"/>
</dbReference>
<dbReference type="RefSeq" id="NP_001139447.1">
    <molecule id="Q13183-3"/>
    <property type="nucleotide sequence ID" value="NM_001145975.2"/>
</dbReference>
<dbReference type="RefSeq" id="NP_003975.1">
    <molecule id="Q13183-1"/>
    <property type="nucleotide sequence ID" value="NM_003984.4"/>
</dbReference>
<dbReference type="RefSeq" id="XP_047292967.1">
    <molecule id="Q13183-2"/>
    <property type="nucleotide sequence ID" value="XM_047437011.1"/>
</dbReference>
<dbReference type="RefSeq" id="XP_054173682.1">
    <molecule id="Q13183-2"/>
    <property type="nucleotide sequence ID" value="XM_054317707.1"/>
</dbReference>
<dbReference type="PDB" id="8W6C">
    <property type="method" value="EM"/>
    <property type="resolution" value="2.70 A"/>
    <property type="chains" value="A/B=1-592"/>
</dbReference>
<dbReference type="PDB" id="8W6D">
    <property type="method" value="EM"/>
    <property type="resolution" value="2.50 A"/>
    <property type="chains" value="A/B=1-592"/>
</dbReference>
<dbReference type="PDB" id="8W6G">
    <property type="method" value="EM"/>
    <property type="resolution" value="3.30 A"/>
    <property type="chains" value="A/B=1-592"/>
</dbReference>
<dbReference type="PDBsum" id="8W6C"/>
<dbReference type="PDBsum" id="8W6D"/>
<dbReference type="PDBsum" id="8W6G"/>
<dbReference type="EMDB" id="EMD-37320"/>
<dbReference type="EMDB" id="EMD-37321"/>
<dbReference type="EMDB" id="EMD-37322"/>
<dbReference type="SMR" id="Q13183"/>
<dbReference type="BioGRID" id="114520">
    <property type="interactions" value="18"/>
</dbReference>
<dbReference type="FunCoup" id="Q13183">
    <property type="interactions" value="236"/>
</dbReference>
<dbReference type="IntAct" id="Q13183">
    <property type="interactions" value="18"/>
</dbReference>
<dbReference type="STRING" id="9606.ENSP00000392411"/>
<dbReference type="BindingDB" id="Q13183"/>
<dbReference type="ChEMBL" id="CHEMBL3712851"/>
<dbReference type="DrugBank" id="DB09154">
    <property type="generic name" value="Sodium citrate"/>
</dbReference>
<dbReference type="DrugBank" id="DB00139">
    <property type="generic name" value="Succinic acid"/>
</dbReference>
<dbReference type="TCDB" id="2.A.47.1.17">
    <property type="family name" value="the divalent anion:na(+) symporter (dass) family"/>
</dbReference>
<dbReference type="iPTMnet" id="Q13183"/>
<dbReference type="PhosphoSitePlus" id="Q13183"/>
<dbReference type="BioMuta" id="SLC13A2"/>
<dbReference type="DMDM" id="2499523"/>
<dbReference type="MassIVE" id="Q13183"/>
<dbReference type="PaxDb" id="9606-ENSP00000392411"/>
<dbReference type="PeptideAtlas" id="Q13183"/>
<dbReference type="ProteomicsDB" id="18206"/>
<dbReference type="ProteomicsDB" id="59209">
    <molecule id="Q13183-1"/>
</dbReference>
<dbReference type="Antibodypedia" id="14078">
    <property type="antibodies" value="72 antibodies from 22 providers"/>
</dbReference>
<dbReference type="DNASU" id="9058"/>
<dbReference type="Ensembl" id="ENST00000314669.10">
    <molecule id="Q13183-1"/>
    <property type="protein sequence ID" value="ENSP00000316202.6"/>
    <property type="gene ID" value="ENSG00000007216.16"/>
</dbReference>
<dbReference type="Ensembl" id="ENST00000444914.7">
    <molecule id="Q13183-3"/>
    <property type="protein sequence ID" value="ENSP00000392411.3"/>
    <property type="gene ID" value="ENSG00000007216.16"/>
</dbReference>
<dbReference type="GeneID" id="9058"/>
<dbReference type="KEGG" id="hsa:9058"/>
<dbReference type="MANE-Select" id="ENST00000314669.10">
    <property type="protein sequence ID" value="ENSP00000316202.6"/>
    <property type="RefSeq nucleotide sequence ID" value="NM_003984.4"/>
    <property type="RefSeq protein sequence ID" value="NP_003975.1"/>
</dbReference>
<dbReference type="UCSC" id="uc002hbh.4">
    <molecule id="Q13183-1"/>
    <property type="organism name" value="human"/>
</dbReference>
<dbReference type="AGR" id="HGNC:10917"/>
<dbReference type="CTD" id="9058"/>
<dbReference type="DisGeNET" id="9058"/>
<dbReference type="GeneCards" id="SLC13A2"/>
<dbReference type="HGNC" id="HGNC:10917">
    <property type="gene designation" value="SLC13A2"/>
</dbReference>
<dbReference type="HPA" id="ENSG00000007216">
    <property type="expression patterns" value="Group enriched (intestine, kidney, salivary gland)"/>
</dbReference>
<dbReference type="MIM" id="604148">
    <property type="type" value="gene"/>
</dbReference>
<dbReference type="neXtProt" id="NX_Q13183"/>
<dbReference type="OpenTargets" id="ENSG00000007216"/>
<dbReference type="PharmGKB" id="PA382"/>
<dbReference type="VEuPathDB" id="HostDB:ENSG00000007216"/>
<dbReference type="eggNOG" id="KOG1281">
    <property type="taxonomic scope" value="Eukaryota"/>
</dbReference>
<dbReference type="GeneTree" id="ENSGT01030000234550"/>
<dbReference type="HOGENOM" id="CLU_005170_9_1_1"/>
<dbReference type="InParanoid" id="Q13183"/>
<dbReference type="OMA" id="MLAINSW"/>
<dbReference type="OrthoDB" id="6493944at2759"/>
<dbReference type="PAN-GO" id="Q13183">
    <property type="GO annotations" value="2 GO annotations based on evolutionary models"/>
</dbReference>
<dbReference type="PhylomeDB" id="Q13183"/>
<dbReference type="TreeFam" id="TF312913"/>
<dbReference type="PathwayCommons" id="Q13183"/>
<dbReference type="Reactome" id="R-HSA-433137">
    <property type="pathway name" value="Sodium-coupled sulphate, di- and tri-carboxylate transporters"/>
</dbReference>
<dbReference type="SABIO-RK" id="Q13183"/>
<dbReference type="SignaLink" id="Q13183"/>
<dbReference type="BioGRID-ORCS" id="9058">
    <property type="hits" value="29 hits in 1153 CRISPR screens"/>
</dbReference>
<dbReference type="ChiTaRS" id="SLC13A2">
    <property type="organism name" value="human"/>
</dbReference>
<dbReference type="GeneWiki" id="SLC13A2"/>
<dbReference type="GenomeRNAi" id="9058"/>
<dbReference type="Pharos" id="Q13183">
    <property type="development level" value="Tbio"/>
</dbReference>
<dbReference type="PRO" id="PR:Q13183"/>
<dbReference type="Proteomes" id="UP000005640">
    <property type="component" value="Chromosome 17"/>
</dbReference>
<dbReference type="RNAct" id="Q13183">
    <property type="molecule type" value="protein"/>
</dbReference>
<dbReference type="Bgee" id="ENSG00000007216">
    <property type="expression patterns" value="Expressed in jejunal mucosa and 74 other cell types or tissues"/>
</dbReference>
<dbReference type="ExpressionAtlas" id="Q13183">
    <property type="expression patterns" value="baseline and differential"/>
</dbReference>
<dbReference type="GO" id="GO:0016324">
    <property type="term" value="C:apical plasma membrane"/>
    <property type="evidence" value="ECO:0000314"/>
    <property type="project" value="UniProtKB"/>
</dbReference>
<dbReference type="GO" id="GO:0070062">
    <property type="term" value="C:extracellular exosome"/>
    <property type="evidence" value="ECO:0007005"/>
    <property type="project" value="UniProtKB"/>
</dbReference>
<dbReference type="GO" id="GO:0016020">
    <property type="term" value="C:membrane"/>
    <property type="evidence" value="ECO:0000304"/>
    <property type="project" value="ProtInc"/>
</dbReference>
<dbReference type="GO" id="GO:0005886">
    <property type="term" value="C:plasma membrane"/>
    <property type="evidence" value="ECO:0000318"/>
    <property type="project" value="GO_Central"/>
</dbReference>
<dbReference type="GO" id="GO:0015139">
    <property type="term" value="F:alpha-ketoglutarate transmembrane transporter activity"/>
    <property type="evidence" value="ECO:0000314"/>
    <property type="project" value="UniProtKB"/>
</dbReference>
<dbReference type="GO" id="GO:0015138">
    <property type="term" value="F:fumarate transmembrane transporter activity"/>
    <property type="evidence" value="ECO:0000314"/>
    <property type="project" value="UniProtKB"/>
</dbReference>
<dbReference type="GO" id="GO:0015361">
    <property type="term" value="F:low-affinity sodium:dicarboxylate symporter activity"/>
    <property type="evidence" value="ECO:0000304"/>
    <property type="project" value="Reactome"/>
</dbReference>
<dbReference type="GO" id="GO:0017153">
    <property type="term" value="F:sodium:dicarboxylate symporter activity"/>
    <property type="evidence" value="ECO:0000314"/>
    <property type="project" value="UniProtKB"/>
</dbReference>
<dbReference type="GO" id="GO:0015141">
    <property type="term" value="F:succinate transmembrane transporter activity"/>
    <property type="evidence" value="ECO:0000314"/>
    <property type="project" value="UniProtKB"/>
</dbReference>
<dbReference type="GO" id="GO:0015742">
    <property type="term" value="P:alpha-ketoglutarate transport"/>
    <property type="evidence" value="ECO:0000314"/>
    <property type="project" value="UniProtKB"/>
</dbReference>
<dbReference type="GO" id="GO:0071285">
    <property type="term" value="P:cellular response to lithium ion"/>
    <property type="evidence" value="ECO:0000314"/>
    <property type="project" value="UniProtKB"/>
</dbReference>
<dbReference type="GO" id="GO:0015741">
    <property type="term" value="P:fumarate transport"/>
    <property type="evidence" value="ECO:0000314"/>
    <property type="project" value="UniProtKB"/>
</dbReference>
<dbReference type="GO" id="GO:0071422">
    <property type="term" value="P:succinate transmembrane transport"/>
    <property type="evidence" value="ECO:0000314"/>
    <property type="project" value="UniProtKB"/>
</dbReference>
<dbReference type="CDD" id="cd01115">
    <property type="entry name" value="SLC13_permease"/>
    <property type="match status" value="1"/>
</dbReference>
<dbReference type="InterPro" id="IPR031312">
    <property type="entry name" value="Na/sul_symport_CS"/>
</dbReference>
<dbReference type="InterPro" id="IPR001898">
    <property type="entry name" value="SLC13A/DASS"/>
</dbReference>
<dbReference type="PANTHER" id="PTHR10283">
    <property type="entry name" value="SOLUTE CARRIER FAMILY 13 MEMBER"/>
    <property type="match status" value="1"/>
</dbReference>
<dbReference type="PANTHER" id="PTHR10283:SF82">
    <property type="entry name" value="SOLUTE CARRIER FAMILY 13 MEMBER 2"/>
    <property type="match status" value="1"/>
</dbReference>
<dbReference type="Pfam" id="PF00939">
    <property type="entry name" value="Na_sulph_symp"/>
    <property type="match status" value="1"/>
</dbReference>
<dbReference type="PROSITE" id="PS01271">
    <property type="entry name" value="NA_SULFATE"/>
    <property type="match status" value="1"/>
</dbReference>
<reference key="1">
    <citation type="journal article" date="1996" name="Am. J. Physiol.">
        <title>Molecular cloning and functional expression of a sodium-dicarboxylate cotransporter from human kidney.</title>
        <authorList>
            <person name="Pajor A.M."/>
        </authorList>
    </citation>
    <scope>NUCLEOTIDE SEQUENCE [MRNA] (ISOFORM 1)</scope>
    <scope>FUNCTION</scope>
    <scope>TRANSPORTER ACTIVITY</scope>
    <scope>BIOPHYSICOCHEMICAL PROPERTIES</scope>
    <scope>TISSUE SPECIFICITY</scope>
    <source>
        <tissue>Kidney</tissue>
    </source>
</reference>
<reference key="2">
    <citation type="journal article" date="2004" name="Nat. Genet.">
        <title>Complete sequencing and characterization of 21,243 full-length human cDNAs.</title>
        <authorList>
            <person name="Ota T."/>
            <person name="Suzuki Y."/>
            <person name="Nishikawa T."/>
            <person name="Otsuki T."/>
            <person name="Sugiyama T."/>
            <person name="Irie R."/>
            <person name="Wakamatsu A."/>
            <person name="Hayashi K."/>
            <person name="Sato H."/>
            <person name="Nagai K."/>
            <person name="Kimura K."/>
            <person name="Makita H."/>
            <person name="Sekine M."/>
            <person name="Obayashi M."/>
            <person name="Nishi T."/>
            <person name="Shibahara T."/>
            <person name="Tanaka T."/>
            <person name="Ishii S."/>
            <person name="Yamamoto J."/>
            <person name="Saito K."/>
            <person name="Kawai Y."/>
            <person name="Isono Y."/>
            <person name="Nakamura Y."/>
            <person name="Nagahari K."/>
            <person name="Murakami K."/>
            <person name="Yasuda T."/>
            <person name="Iwayanagi T."/>
            <person name="Wagatsuma M."/>
            <person name="Shiratori A."/>
            <person name="Sudo H."/>
            <person name="Hosoiri T."/>
            <person name="Kaku Y."/>
            <person name="Kodaira H."/>
            <person name="Kondo H."/>
            <person name="Sugawara M."/>
            <person name="Takahashi M."/>
            <person name="Kanda K."/>
            <person name="Yokoi T."/>
            <person name="Furuya T."/>
            <person name="Kikkawa E."/>
            <person name="Omura Y."/>
            <person name="Abe K."/>
            <person name="Kamihara K."/>
            <person name="Katsuta N."/>
            <person name="Sato K."/>
            <person name="Tanikawa M."/>
            <person name="Yamazaki M."/>
            <person name="Ninomiya K."/>
            <person name="Ishibashi T."/>
            <person name="Yamashita H."/>
            <person name="Murakawa K."/>
            <person name="Fujimori K."/>
            <person name="Tanai H."/>
            <person name="Kimata M."/>
            <person name="Watanabe M."/>
            <person name="Hiraoka S."/>
            <person name="Chiba Y."/>
            <person name="Ishida S."/>
            <person name="Ono Y."/>
            <person name="Takiguchi S."/>
            <person name="Watanabe S."/>
            <person name="Yosida M."/>
            <person name="Hotuta T."/>
            <person name="Kusano J."/>
            <person name="Kanehori K."/>
            <person name="Takahashi-Fujii A."/>
            <person name="Hara H."/>
            <person name="Tanase T.-O."/>
            <person name="Nomura Y."/>
            <person name="Togiya S."/>
            <person name="Komai F."/>
            <person name="Hara R."/>
            <person name="Takeuchi K."/>
            <person name="Arita M."/>
            <person name="Imose N."/>
            <person name="Musashino K."/>
            <person name="Yuuki H."/>
            <person name="Oshima A."/>
            <person name="Sasaki N."/>
            <person name="Aotsuka S."/>
            <person name="Yoshikawa Y."/>
            <person name="Matsunawa H."/>
            <person name="Ichihara T."/>
            <person name="Shiohata N."/>
            <person name="Sano S."/>
            <person name="Moriya S."/>
            <person name="Momiyama H."/>
            <person name="Satoh N."/>
            <person name="Takami S."/>
            <person name="Terashima Y."/>
            <person name="Suzuki O."/>
            <person name="Nakagawa S."/>
            <person name="Senoh A."/>
            <person name="Mizoguchi H."/>
            <person name="Goto Y."/>
            <person name="Shimizu F."/>
            <person name="Wakebe H."/>
            <person name="Hishigaki H."/>
            <person name="Watanabe T."/>
            <person name="Sugiyama A."/>
            <person name="Takemoto M."/>
            <person name="Kawakami B."/>
            <person name="Yamazaki M."/>
            <person name="Watanabe K."/>
            <person name="Kumagai A."/>
            <person name="Itakura S."/>
            <person name="Fukuzumi Y."/>
            <person name="Fujimori Y."/>
            <person name="Komiyama M."/>
            <person name="Tashiro H."/>
            <person name="Tanigami A."/>
            <person name="Fujiwara T."/>
            <person name="Ono T."/>
            <person name="Yamada K."/>
            <person name="Fujii Y."/>
            <person name="Ozaki K."/>
            <person name="Hirao M."/>
            <person name="Ohmori Y."/>
            <person name="Kawabata A."/>
            <person name="Hikiji T."/>
            <person name="Kobatake N."/>
            <person name="Inagaki H."/>
            <person name="Ikema Y."/>
            <person name="Okamoto S."/>
            <person name="Okitani R."/>
            <person name="Kawakami T."/>
            <person name="Noguchi S."/>
            <person name="Itoh T."/>
            <person name="Shigeta K."/>
            <person name="Senba T."/>
            <person name="Matsumura K."/>
            <person name="Nakajima Y."/>
            <person name="Mizuno T."/>
            <person name="Morinaga M."/>
            <person name="Sasaki M."/>
            <person name="Togashi T."/>
            <person name="Oyama M."/>
            <person name="Hata H."/>
            <person name="Watanabe M."/>
            <person name="Komatsu T."/>
            <person name="Mizushima-Sugano J."/>
            <person name="Satoh T."/>
            <person name="Shirai Y."/>
            <person name="Takahashi Y."/>
            <person name="Nakagawa K."/>
            <person name="Okumura K."/>
            <person name="Nagase T."/>
            <person name="Nomura N."/>
            <person name="Kikuchi H."/>
            <person name="Masuho Y."/>
            <person name="Yamashita R."/>
            <person name="Nakai K."/>
            <person name="Yada T."/>
            <person name="Nakamura Y."/>
            <person name="Ohara O."/>
            <person name="Isogai T."/>
            <person name="Sugano S."/>
        </authorList>
    </citation>
    <scope>NUCLEOTIDE SEQUENCE [LARGE SCALE MRNA] (ISOFORMS 1 AND 2)</scope>
    <scope>VARIANT VAL-550</scope>
    <source>
        <tissue>Kidney</tissue>
    </source>
</reference>
<reference key="3">
    <citation type="journal article" date="2006" name="Nature">
        <title>DNA sequence of human chromosome 17 and analysis of rearrangement in the human lineage.</title>
        <authorList>
            <person name="Zody M.C."/>
            <person name="Garber M."/>
            <person name="Adams D.J."/>
            <person name="Sharpe T."/>
            <person name="Harrow J."/>
            <person name="Lupski J.R."/>
            <person name="Nicholson C."/>
            <person name="Searle S.M."/>
            <person name="Wilming L."/>
            <person name="Young S.K."/>
            <person name="Abouelleil A."/>
            <person name="Allen N.R."/>
            <person name="Bi W."/>
            <person name="Bloom T."/>
            <person name="Borowsky M.L."/>
            <person name="Bugalter B.E."/>
            <person name="Butler J."/>
            <person name="Chang J.L."/>
            <person name="Chen C.-K."/>
            <person name="Cook A."/>
            <person name="Corum B."/>
            <person name="Cuomo C.A."/>
            <person name="de Jong P.J."/>
            <person name="DeCaprio D."/>
            <person name="Dewar K."/>
            <person name="FitzGerald M."/>
            <person name="Gilbert J."/>
            <person name="Gibson R."/>
            <person name="Gnerre S."/>
            <person name="Goldstein S."/>
            <person name="Grafham D.V."/>
            <person name="Grocock R."/>
            <person name="Hafez N."/>
            <person name="Hagopian D.S."/>
            <person name="Hart E."/>
            <person name="Norman C.H."/>
            <person name="Humphray S."/>
            <person name="Jaffe D.B."/>
            <person name="Jones M."/>
            <person name="Kamal M."/>
            <person name="Khodiyar V.K."/>
            <person name="LaButti K."/>
            <person name="Laird G."/>
            <person name="Lehoczky J."/>
            <person name="Liu X."/>
            <person name="Lokyitsang T."/>
            <person name="Loveland J."/>
            <person name="Lui A."/>
            <person name="Macdonald P."/>
            <person name="Major J.E."/>
            <person name="Matthews L."/>
            <person name="Mauceli E."/>
            <person name="McCarroll S.A."/>
            <person name="Mihalev A.H."/>
            <person name="Mudge J."/>
            <person name="Nguyen C."/>
            <person name="Nicol R."/>
            <person name="O'Leary S.B."/>
            <person name="Osoegawa K."/>
            <person name="Schwartz D.C."/>
            <person name="Shaw-Smith C."/>
            <person name="Stankiewicz P."/>
            <person name="Steward C."/>
            <person name="Swarbreck D."/>
            <person name="Venkataraman V."/>
            <person name="Whittaker C.A."/>
            <person name="Yang X."/>
            <person name="Zimmer A.R."/>
            <person name="Bradley A."/>
            <person name="Hubbard T."/>
            <person name="Birren B.W."/>
            <person name="Rogers J."/>
            <person name="Lander E.S."/>
            <person name="Nusbaum C."/>
        </authorList>
    </citation>
    <scope>NUCLEOTIDE SEQUENCE [LARGE SCALE GENOMIC DNA]</scope>
</reference>
<reference key="4">
    <citation type="journal article" date="1998" name="J. Biol. Chem.">
        <title>Sodium and lithium interactions with the Na+/Dicarboxylate cotransporter.</title>
        <authorList>
            <person name="Pajor A.M."/>
            <person name="Hirayama B.A."/>
            <person name="Loo D.D."/>
        </authorList>
    </citation>
    <scope>FUNCTION</scope>
    <scope>TRANSPORTER ACTIVITY</scope>
    <scope>ACTIVITY REGULATION</scope>
</reference>
<reference key="5">
    <citation type="journal article" date="2000" name="Am. J. Physiol.">
        <title>The transport properties of the human renal Na(+)- dicarboxylate cotransporter under voltage-clamp conditions.</title>
        <authorList>
            <person name="Yao X."/>
            <person name="Pajor A.M."/>
        </authorList>
    </citation>
    <scope>FUNCTION</scope>
    <scope>TRANSPORTER ACTIVITY</scope>
    <scope>SUBSTRATE SPECIFICITY</scope>
</reference>
<reference key="6">
    <citation type="journal article" date="2004" name="Genome Res.">
        <title>The status, quality, and expansion of the NIH full-length cDNA project: the Mammalian Gene Collection (MGC).</title>
        <authorList>
            <consortium name="The MGC Project Team"/>
        </authorList>
    </citation>
    <scope>NUCLEOTIDE SEQUENCE [LARGE SCALE MRNA] (ISOFORM 1)</scope>
</reference>
<reference key="7">
    <citation type="journal article" date="2017" name="Am. J. Physiol.">
        <title>Expression of sodium-dependent dicarboxylate transporter 1 (NaDC1/SLC13A2) in normal and neoplastic human kidney.</title>
        <authorList>
            <person name="Lee H.W."/>
            <person name="Handlogten M.E."/>
            <person name="Osis G."/>
            <person name="Clapp W.L."/>
            <person name="Wakefield D.N."/>
            <person name="Verlander J.W."/>
            <person name="Weiner I.D."/>
        </authorList>
    </citation>
    <scope>SUBCELLULAR LOCATION</scope>
    <scope>TISSUE SPECIFICITY</scope>
</reference>
<reference key="8">
    <citation type="journal article" date="2007" name="Int. J. Urol.">
        <title>Associations between renal sodium-citrate cotransporter (hNaDC-1) gene polymorphism and urinary citrate excretion in recurrent renal calcium stone formers and normal controls.</title>
        <authorList>
            <person name="Okamoto N."/>
            <person name="Aruga S."/>
            <person name="Matsuzaki S."/>
            <person name="Takahashi S."/>
            <person name="Matsushita K."/>
            <person name="Kitamura T."/>
        </authorList>
    </citation>
    <scope>VARIANT VAL-550</scope>
</reference>
<name>S13A2_HUMAN</name>
<organism>
    <name type="scientific">Homo sapiens</name>
    <name type="common">Human</name>
    <dbReference type="NCBI Taxonomy" id="9606"/>
    <lineage>
        <taxon>Eukaryota</taxon>
        <taxon>Metazoa</taxon>
        <taxon>Chordata</taxon>
        <taxon>Craniata</taxon>
        <taxon>Vertebrata</taxon>
        <taxon>Euteleostomi</taxon>
        <taxon>Mammalia</taxon>
        <taxon>Eutheria</taxon>
        <taxon>Euarchontoglires</taxon>
        <taxon>Primates</taxon>
        <taxon>Haplorrhini</taxon>
        <taxon>Catarrhini</taxon>
        <taxon>Hominidae</taxon>
        <taxon>Homo</taxon>
    </lineage>
</organism>
<protein>
    <recommendedName>
        <fullName>Solute carrier family 13 member 2</fullName>
    </recommendedName>
    <alternativeName>
        <fullName>Na(+)/dicarboxylate cotransporter 1</fullName>
        <shortName evidence="10">NaDC-1</shortName>
    </alternativeName>
    <alternativeName>
        <fullName>Renal sodium/dicarboxylate cotransporter</fullName>
    </alternativeName>
</protein>
<feature type="chain" id="PRO_0000172488" description="Solute carrier family 13 member 2">
    <location>
        <begin position="1"/>
        <end position="592"/>
    </location>
</feature>
<feature type="transmembrane region" description="Helical" evidence="2">
    <location>
        <begin position="13"/>
        <end position="33"/>
    </location>
</feature>
<feature type="transmembrane region" description="Helical" evidence="2">
    <location>
        <begin position="53"/>
        <end position="73"/>
    </location>
</feature>
<feature type="transmembrane region" description="Helical" evidence="2">
    <location>
        <begin position="86"/>
        <end position="106"/>
    </location>
</feature>
<feature type="transmembrane region" description="Helical" evidence="2">
    <location>
        <begin position="114"/>
        <end position="134"/>
    </location>
</feature>
<feature type="transmembrane region" description="Helical" evidence="2">
    <location>
        <begin position="221"/>
        <end position="241"/>
    </location>
</feature>
<feature type="transmembrane region" description="Helical" evidence="2">
    <location>
        <begin position="274"/>
        <end position="294"/>
    </location>
</feature>
<feature type="transmembrane region" description="Helical" evidence="2">
    <location>
        <begin position="324"/>
        <end position="344"/>
    </location>
</feature>
<feature type="transmembrane region" description="Helical" evidence="2">
    <location>
        <begin position="371"/>
        <end position="391"/>
    </location>
</feature>
<feature type="transmembrane region" description="Helical" evidence="2">
    <location>
        <begin position="450"/>
        <end position="470"/>
    </location>
</feature>
<feature type="transmembrane region" description="Helical" evidence="2">
    <location>
        <begin position="482"/>
        <end position="502"/>
    </location>
</feature>
<feature type="transmembrane region" description="Helical" evidence="2">
    <location>
        <begin position="511"/>
        <end position="531"/>
    </location>
</feature>
<feature type="transmembrane region" description="Helical" evidence="2">
    <location>
        <begin position="545"/>
        <end position="565"/>
    </location>
</feature>
<feature type="region of interest" description="Disordered" evidence="3">
    <location>
        <begin position="165"/>
        <end position="185"/>
    </location>
</feature>
<feature type="compositionally biased region" description="Polar residues" evidence="3">
    <location>
        <begin position="165"/>
        <end position="177"/>
    </location>
</feature>
<feature type="splice variant" id="VSP_046426" description="In isoform 2." evidence="11">
    <location>
        <begin position="1"/>
        <end position="44"/>
    </location>
</feature>
<feature type="splice variant" id="VSP_046427" description="In isoform 2 and isoform 3." evidence="11">
    <original>E</original>
    <variation>EIIQRPFPSSFESPGECQSVGMSVTASHNLGGTVGDSRVFPPLSHVSTCQ</variation>
    <location>
        <position position="77"/>
    </location>
</feature>
<feature type="sequence variant" id="VAR_029254" description="In dbSNP:rs45443898.">
    <original>L</original>
    <variation>F</variation>
    <location>
        <position position="44"/>
    </location>
</feature>
<feature type="sequence variant" id="VAR_052000" description="In dbSNP:rs16964363.">
    <original>M</original>
    <variation>L</variation>
    <location>
        <position position="45"/>
    </location>
</feature>
<feature type="sequence variant" id="VAR_029255" description="In dbSNP:rs11568461.">
    <original>F</original>
    <variation>L</variation>
    <location>
        <position position="254"/>
    </location>
</feature>
<feature type="sequence variant" id="VAR_029256" description="In dbSNP:rs11568441.">
    <original>A</original>
    <variation>P</variation>
    <location>
        <position position="310"/>
    </location>
</feature>
<feature type="sequence variant" id="VAR_020399" description="In dbSNP:rs45546232.">
    <original>P</original>
    <variation>S</variation>
    <location>
        <position position="385"/>
    </location>
</feature>
<feature type="sequence variant" id="VAR_029257" description="In dbSNP:rs11568476.">
    <original>V</original>
    <variation>M</variation>
    <location>
        <position position="477"/>
    </location>
</feature>
<feature type="sequence variant" id="VAR_020400" description="In dbSNP:rs11567842." evidence="5 6">
    <original>I</original>
    <variation>V</variation>
    <location>
        <position position="550"/>
    </location>
</feature>
<feature type="sequence conflict" description="In Ref. 2; BAG60623." evidence="12" ref="2">
    <original>Q</original>
    <variation>R</variation>
    <location>
        <position position="307"/>
    </location>
</feature>
<proteinExistence type="evidence at protein level"/>
<comment type="function">
    <text evidence="1 4 8 9">Low-affinity sodium-dicarboxylate cotransporter, that mediates the entry of citric acid cycle intermediates, such as succinate, citrate, fumarate and alpha-ketoglutarate (2-oxoglutarate) into the small intestine and renal proximal tubule (PubMed:10894787, PubMed:8967342, PubMed:9668069). Transports the dicarboxylate into the cell with a probable stoichiometry of 3 Na(+) for 1 divalent dicarboxylate, rendering the process electrogenic (PubMed:10894787, PubMed:8967342, PubMed:9668069). Citrate is transported in protonated form as a divalent anion, rather than the trivalent form which is normally found in blood (PubMed:10894787). Has a critical role in renal dicarboxylate transport (By similarity).</text>
</comment>
<comment type="catalytic activity">
    <reaction evidence="4 8 9">
        <text>succinate(out) + 3 Na(+)(out) = succinate(in) + 3 Na(+)(in)</text>
        <dbReference type="Rhea" id="RHEA:71919"/>
        <dbReference type="ChEBI" id="CHEBI:29101"/>
        <dbReference type="ChEBI" id="CHEBI:30031"/>
    </reaction>
</comment>
<comment type="catalytic activity">
    <reaction evidence="4 9">
        <text>fumarate(out) + 3 Na(+)(out) = fumarate(in) + 3 Na(+)(in)</text>
        <dbReference type="Rhea" id="RHEA:71931"/>
        <dbReference type="ChEBI" id="CHEBI:29101"/>
        <dbReference type="ChEBI" id="CHEBI:29806"/>
    </reaction>
</comment>
<comment type="catalytic activity">
    <reaction evidence="4 9">
        <text>2-oxoglutarate(out) + 3 Na(+)(out) = 2-oxoglutarate(in) + 3 Na(+)(in)</text>
        <dbReference type="Rhea" id="RHEA:71939"/>
        <dbReference type="ChEBI" id="CHEBI:16810"/>
        <dbReference type="ChEBI" id="CHEBI:29101"/>
    </reaction>
</comment>
<comment type="activity regulation">
    <text evidence="9">Li(+) decreases succinate transport in the presence of Na(+), by competing at one of the three cation binding sites.</text>
</comment>
<comment type="biophysicochemical properties">
    <kinetics>
        <KM evidence="8">0.4 mM for succinate</KM>
    </kinetics>
</comment>
<comment type="interaction">
    <interactant intactId="EBI-17460043">
        <id>Q13183</id>
    </interactant>
    <interactant intactId="EBI-6942903">
        <id>Q96BA8</id>
        <label>CREB3L1</label>
    </interactant>
    <organismsDiffer>false</organismsDiffer>
    <experiments>3</experiments>
</comment>
<comment type="interaction">
    <interactant intactId="EBI-17460043">
        <id>Q13183</id>
    </interactant>
    <interactant intactId="EBI-17458373">
        <id>P48165</id>
        <label>GJA8</label>
    </interactant>
    <organismsDiffer>false</organismsDiffer>
    <experiments>3</experiments>
</comment>
<comment type="interaction">
    <interactant intactId="EBI-17460043">
        <id>Q13183</id>
    </interactant>
    <interactant intactId="EBI-720609">
        <id>O76024</id>
        <label>WFS1</label>
    </interactant>
    <organismsDiffer>false</organismsDiffer>
    <experiments>3</experiments>
</comment>
<comment type="subcellular location">
    <subcellularLocation>
        <location evidence="7">Apical cell membrane</location>
        <topology evidence="2">Multi-pass membrane protein</topology>
    </subcellularLocation>
</comment>
<comment type="alternative products">
    <event type="alternative splicing"/>
    <isoform>
        <id>Q13183-1</id>
        <name>1</name>
        <sequence type="displayed"/>
    </isoform>
    <isoform>
        <id>Q13183-2</id>
        <name>2</name>
        <sequence type="described" ref="VSP_046426 VSP_046427"/>
    </isoform>
    <isoform>
        <id>Q13183-3</id>
        <name>3</name>
        <sequence type="described" ref="VSP_046427"/>
    </isoform>
</comment>
<comment type="tissue specificity">
    <text evidence="7 8">Expressed in kidney and intestine (PubMed:8967342). In kidney expressed in the proximal tubule (at protein level) (PubMed:27927654).</text>
</comment>
<comment type="similarity">
    <text evidence="12">Belongs to the SLC13A/DASS transporter (TC 2.A.47) family. NADC subfamily.</text>
</comment>
<accession>Q13183</accession>
<accession>B2RBI9</accession>
<accession>B4DPL1</accession>
<accession>E7ETH5</accession>
<accession>Q4VAR7</accession>
<evidence type="ECO:0000250" key="1">
    <source>
        <dbReference type="UniProtKB" id="Q9ES88"/>
    </source>
</evidence>
<evidence type="ECO:0000255" key="2"/>
<evidence type="ECO:0000256" key="3">
    <source>
        <dbReference type="SAM" id="MobiDB-lite"/>
    </source>
</evidence>
<evidence type="ECO:0000269" key="4">
    <source>
    </source>
</evidence>
<evidence type="ECO:0000269" key="5">
    <source>
    </source>
</evidence>
<evidence type="ECO:0000269" key="6">
    <source>
    </source>
</evidence>
<evidence type="ECO:0000269" key="7">
    <source>
    </source>
</evidence>
<evidence type="ECO:0000269" key="8">
    <source>
    </source>
</evidence>
<evidence type="ECO:0000269" key="9">
    <source>
    </source>
</evidence>
<evidence type="ECO:0000303" key="10">
    <source>
    </source>
</evidence>
<evidence type="ECO:0000303" key="11">
    <source>
    </source>
</evidence>
<evidence type="ECO:0000305" key="12"/>
<sequence length="592" mass="64410">MATCWQALWAYRSYLIVFFVPILLLPLPILVPSKEAYCAYAIILMALFWCTEALPLAVTALFPLILFPMMGIVDASEVAVEYLKDSNLLFFGGLLVAIAVEHWNLHKRIALRVLLIVGVRPAPLILGFMLVTAFLSMWISNTATSAMMVPIAHAVLDQLHSSQASSNVEEGSNNPTFELQEPSPQKEVTKLDNGQALPVTSASSEGRAHLSQKHLHLTQCMSLCVCYSASIGGIATLTGTAPNLVLQGQINSLFPQNGNVVNFASWFSFAFPTMVILLLLAWLWLQILFLGFNFRKNFGIGEKMQEQQQAAYCVIQTEHRLLGPMTFAEKAISILFVILVLLWFTREPGFFLGWGNLAFPNAKGESMVSDGTVAIFIGIIMFIIPSKFPGLTQDPENPGKLKAPLGLLDWKTVNQKMPWNIVLLLGGGYALAKGSERSGLSEWLGNKLTPLQSVPAPAIAIILSLLVATFTECTSNVATTTIFLPILASMAQAICLHPLYVMLPCTLATSLAFMLPVATPPNAIVFSFGDLKVLDMARAGFLLNIIGVLIIALAINSWGIPLFSLHSFPSWAQSNTTAQCLPSLANTTTPSP</sequence>
<gene>
    <name type="primary">SLC13A2</name>
    <name type="synonym">NADC1</name>
    <name type="synonym">SDCT1</name>
</gene>
<keyword id="KW-0002">3D-structure</keyword>
<keyword id="KW-0025">Alternative splicing</keyword>
<keyword id="KW-1003">Cell membrane</keyword>
<keyword id="KW-0406">Ion transport</keyword>
<keyword id="KW-0472">Membrane</keyword>
<keyword id="KW-1267">Proteomics identification</keyword>
<keyword id="KW-1185">Reference proteome</keyword>
<keyword id="KW-0915">Sodium</keyword>
<keyword id="KW-0739">Sodium transport</keyword>
<keyword id="KW-0769">Symport</keyword>
<keyword id="KW-0812">Transmembrane</keyword>
<keyword id="KW-1133">Transmembrane helix</keyword>
<keyword id="KW-0813">Transport</keyword>